<proteinExistence type="evidence at protein level"/>
<feature type="chain" id="PRO_0000422165" description="Complex I assembly factor TMEM126B, mitochondrial">
    <location>
        <begin position="1"/>
        <end position="229"/>
    </location>
</feature>
<feature type="transmembrane region" description="Helical" evidence="2">
    <location>
        <begin position="71"/>
        <end position="91"/>
    </location>
</feature>
<feature type="transmembrane region" description="Helical" evidence="2">
    <location>
        <begin position="109"/>
        <end position="129"/>
    </location>
</feature>
<feature type="transmembrane region" description="Helical" evidence="2">
    <location>
        <begin position="140"/>
        <end position="160"/>
    </location>
</feature>
<feature type="transmembrane region" description="Helical" evidence="2">
    <location>
        <begin position="198"/>
        <end position="218"/>
    </location>
</feature>
<feature type="sequence conflict" description="In Ref. 2; AAI67111." evidence="4" ref="2">
    <original>D</original>
    <variation>E</variation>
    <location>
        <position position="44"/>
    </location>
</feature>
<keyword id="KW-0143">Chaperone</keyword>
<keyword id="KW-0472">Membrane</keyword>
<keyword id="KW-0496">Mitochondrion</keyword>
<keyword id="KW-1185">Reference proteome</keyword>
<keyword id="KW-0812">Transmembrane</keyword>
<keyword id="KW-1133">Transmembrane helix</keyword>
<organism>
    <name type="scientific">Rattus norvegicus</name>
    <name type="common">Rat</name>
    <dbReference type="NCBI Taxonomy" id="10116"/>
    <lineage>
        <taxon>Eukaryota</taxon>
        <taxon>Metazoa</taxon>
        <taxon>Chordata</taxon>
        <taxon>Craniata</taxon>
        <taxon>Vertebrata</taxon>
        <taxon>Euteleostomi</taxon>
        <taxon>Mammalia</taxon>
        <taxon>Eutheria</taxon>
        <taxon>Euarchontoglires</taxon>
        <taxon>Glires</taxon>
        <taxon>Rodentia</taxon>
        <taxon>Myomorpha</taxon>
        <taxon>Muroidea</taxon>
        <taxon>Muridae</taxon>
        <taxon>Murinae</taxon>
        <taxon>Rattus</taxon>
    </lineage>
</organism>
<evidence type="ECO:0000250" key="1">
    <source>
        <dbReference type="UniProtKB" id="Q8IUX1"/>
    </source>
</evidence>
<evidence type="ECO:0000255" key="2"/>
<evidence type="ECO:0000269" key="3">
    <source>
    </source>
</evidence>
<evidence type="ECO:0000305" key="4"/>
<evidence type="ECO:0000312" key="5">
    <source>
        <dbReference type="RGD" id="1308371"/>
    </source>
</evidence>
<protein>
    <recommendedName>
        <fullName evidence="4">Complex I assembly factor TMEM126B, mitochondrial</fullName>
    </recommendedName>
    <alternativeName>
        <fullName>Transmembrane protein 126B</fullName>
    </alternativeName>
</protein>
<dbReference type="EMBL" id="CH473956">
    <property type="protein sequence ID" value="EDM18534.1"/>
    <property type="molecule type" value="Genomic_DNA"/>
</dbReference>
<dbReference type="EMBL" id="BC167111">
    <property type="protein sequence ID" value="AAI67111.1"/>
    <property type="molecule type" value="mRNA"/>
</dbReference>
<dbReference type="RefSeq" id="NP_001099750.2">
    <property type="nucleotide sequence ID" value="NM_001106280.2"/>
</dbReference>
<dbReference type="FunCoup" id="B2RZD2">
    <property type="interactions" value="588"/>
</dbReference>
<dbReference type="STRING" id="10116.ENSRNOP00000031739"/>
<dbReference type="PhosphoSitePlus" id="B2RZD2"/>
<dbReference type="PaxDb" id="10116-ENSRNOP00000031739"/>
<dbReference type="PeptideAtlas" id="B2RZD2"/>
<dbReference type="Ensembl" id="ENSRNOT00000038279.7">
    <property type="protein sequence ID" value="ENSRNOP00000031739.4"/>
    <property type="gene ID" value="ENSRNOG00000022732.7"/>
</dbReference>
<dbReference type="GeneID" id="293114"/>
<dbReference type="KEGG" id="rno:293114"/>
<dbReference type="AGR" id="RGD:1308371"/>
<dbReference type="CTD" id="55863"/>
<dbReference type="RGD" id="1308371">
    <property type="gene designation" value="Tmem126b"/>
</dbReference>
<dbReference type="eggNOG" id="ENOG502SQEZ">
    <property type="taxonomic scope" value="Eukaryota"/>
</dbReference>
<dbReference type="GeneTree" id="ENSGT00520000055616"/>
<dbReference type="HOGENOM" id="CLU_105475_0_0_1"/>
<dbReference type="InParanoid" id="B2RZD2"/>
<dbReference type="OMA" id="QHYARFE"/>
<dbReference type="OrthoDB" id="38239at9989"/>
<dbReference type="PhylomeDB" id="B2RZD2"/>
<dbReference type="TreeFam" id="TF327069"/>
<dbReference type="Reactome" id="R-RNO-6799198">
    <property type="pathway name" value="Complex I biogenesis"/>
</dbReference>
<dbReference type="PRO" id="PR:B2RZD2"/>
<dbReference type="Proteomes" id="UP000002494">
    <property type="component" value="Chromosome 1"/>
</dbReference>
<dbReference type="Proteomes" id="UP000234681">
    <property type="component" value="Chromosome 1"/>
</dbReference>
<dbReference type="Bgee" id="ENSRNOG00000022732">
    <property type="expression patterns" value="Expressed in quadriceps femoris and 20 other cell types or tissues"/>
</dbReference>
<dbReference type="GO" id="GO:0031966">
    <property type="term" value="C:mitochondrial membrane"/>
    <property type="evidence" value="ECO:0007669"/>
    <property type="project" value="UniProtKB-SubCell"/>
</dbReference>
<dbReference type="GO" id="GO:0005739">
    <property type="term" value="C:mitochondrion"/>
    <property type="evidence" value="ECO:0000318"/>
    <property type="project" value="GO_Central"/>
</dbReference>
<dbReference type="GO" id="GO:0032981">
    <property type="term" value="P:mitochondrial respiratory chain complex I assembly"/>
    <property type="evidence" value="ECO:0000266"/>
    <property type="project" value="RGD"/>
</dbReference>
<dbReference type="GO" id="GO:0007005">
    <property type="term" value="P:mitochondrion organization"/>
    <property type="evidence" value="ECO:0000266"/>
    <property type="project" value="RGD"/>
</dbReference>
<dbReference type="GO" id="GO:0032094">
    <property type="term" value="P:response to food"/>
    <property type="evidence" value="ECO:0000266"/>
    <property type="project" value="RGD"/>
</dbReference>
<dbReference type="InterPro" id="IPR009801">
    <property type="entry name" value="TMEM126"/>
</dbReference>
<dbReference type="PANTHER" id="PTHR16296:SF3">
    <property type="entry name" value="COMPLEX I ASSEMBLY FACTOR TMEM126B, MITOCHONDRIAL"/>
    <property type="match status" value="1"/>
</dbReference>
<dbReference type="PANTHER" id="PTHR16296">
    <property type="entry name" value="UNCHARACTERIZED HYPOTHALAMUS PROTEIN HT007"/>
    <property type="match status" value="1"/>
</dbReference>
<dbReference type="Pfam" id="PF07114">
    <property type="entry name" value="TMEM126"/>
    <property type="match status" value="1"/>
</dbReference>
<name>T126B_RAT</name>
<accession>B2RZD2</accession>
<accession>G3V8Z8</accession>
<comment type="function">
    <text evidence="1 3">As part of the MCIA complex, involved in the assembly of the mitochondrial complex I (PubMed:22982022). Participates in constructing the membrane arm of complex I (By similarity).</text>
</comment>
<comment type="subunit">
    <text evidence="1 3">Part of the mitochondrial complex I assembly/MCIA complex that comprises at least the core subunits TMEM126B, NDUFAF1, ECSIT and ACAD9 and complement subunits such as COA1 and TMEM186 (PubMed:22982022). Associates with the intermediate 370 kDa subcomplex of incompletely assembled complex I (By similarity). Interacts with TMEM70 (By similarity).</text>
</comment>
<comment type="subcellular location">
    <subcellularLocation>
        <location evidence="3">Mitochondrion membrane</location>
        <topology evidence="3">Multi-pass membrane protein</topology>
    </subcellularLocation>
</comment>
<comment type="disruption phenotype">
    <text evidence="3">Reduction in respiration by about two-thirds, only when the electrons were fed into complex I via the NADH-linked substrates malate and glutamate in ADP-stimulated mitochondria.</text>
</comment>
<sequence>MASERPTGSESGDAGVVLEGNREASQDIKMALYKHGRLIPSLGDAKFGRPMIAEILEKKFESYRNDQTLNIRGTLFFGVSSSLSGVMANLVFRYSFKVKYEALRTYASLTTLPFVATAVTYKLFVTDALQSGNISQESCVLRSSLIGVACGVSYPSALAFYKNGRLAVKYHTVPVPPKGRVMLHWLLLCQTGMKAMAVPLLFQIIFGVFNGLYHYAVCEKAYARIVPDD</sequence>
<reference key="1">
    <citation type="journal article" date="2004" name="Nature">
        <title>Genome sequence of the Brown Norway rat yields insights into mammalian evolution.</title>
        <authorList>
            <person name="Gibbs R.A."/>
            <person name="Weinstock G.M."/>
            <person name="Metzker M.L."/>
            <person name="Muzny D.M."/>
            <person name="Sodergren E.J."/>
            <person name="Scherer S."/>
            <person name="Scott G."/>
            <person name="Steffen D."/>
            <person name="Worley K.C."/>
            <person name="Burch P.E."/>
            <person name="Okwuonu G."/>
            <person name="Hines S."/>
            <person name="Lewis L."/>
            <person name="Deramo C."/>
            <person name="Delgado O."/>
            <person name="Dugan-Rocha S."/>
            <person name="Miner G."/>
            <person name="Morgan M."/>
            <person name="Hawes A."/>
            <person name="Gill R."/>
            <person name="Holt R.A."/>
            <person name="Adams M.D."/>
            <person name="Amanatides P.G."/>
            <person name="Baden-Tillson H."/>
            <person name="Barnstead M."/>
            <person name="Chin S."/>
            <person name="Evans C.A."/>
            <person name="Ferriera S."/>
            <person name="Fosler C."/>
            <person name="Glodek A."/>
            <person name="Gu Z."/>
            <person name="Jennings D."/>
            <person name="Kraft C.L."/>
            <person name="Nguyen T."/>
            <person name="Pfannkoch C.M."/>
            <person name="Sitter C."/>
            <person name="Sutton G.G."/>
            <person name="Venter J.C."/>
            <person name="Woodage T."/>
            <person name="Smith D."/>
            <person name="Lee H.-M."/>
            <person name="Gustafson E."/>
            <person name="Cahill P."/>
            <person name="Kana A."/>
            <person name="Doucette-Stamm L."/>
            <person name="Weinstock K."/>
            <person name="Fechtel K."/>
            <person name="Weiss R.B."/>
            <person name="Dunn D.M."/>
            <person name="Green E.D."/>
            <person name="Blakesley R.W."/>
            <person name="Bouffard G.G."/>
            <person name="De Jong P.J."/>
            <person name="Osoegawa K."/>
            <person name="Zhu B."/>
            <person name="Marra M."/>
            <person name="Schein J."/>
            <person name="Bosdet I."/>
            <person name="Fjell C."/>
            <person name="Jones S."/>
            <person name="Krzywinski M."/>
            <person name="Mathewson C."/>
            <person name="Siddiqui A."/>
            <person name="Wye N."/>
            <person name="McPherson J."/>
            <person name="Zhao S."/>
            <person name="Fraser C.M."/>
            <person name="Shetty J."/>
            <person name="Shatsman S."/>
            <person name="Geer K."/>
            <person name="Chen Y."/>
            <person name="Abramzon S."/>
            <person name="Nierman W.C."/>
            <person name="Havlak P.H."/>
            <person name="Chen R."/>
            <person name="Durbin K.J."/>
            <person name="Egan A."/>
            <person name="Ren Y."/>
            <person name="Song X.-Z."/>
            <person name="Li B."/>
            <person name="Liu Y."/>
            <person name="Qin X."/>
            <person name="Cawley S."/>
            <person name="Cooney A.J."/>
            <person name="D'Souza L.M."/>
            <person name="Martin K."/>
            <person name="Wu J.Q."/>
            <person name="Gonzalez-Garay M.L."/>
            <person name="Jackson A.R."/>
            <person name="Kalafus K.J."/>
            <person name="McLeod M.P."/>
            <person name="Milosavljevic A."/>
            <person name="Virk D."/>
            <person name="Volkov A."/>
            <person name="Wheeler D.A."/>
            <person name="Zhang Z."/>
            <person name="Bailey J.A."/>
            <person name="Eichler E.E."/>
            <person name="Tuzun E."/>
            <person name="Birney E."/>
            <person name="Mongin E."/>
            <person name="Ureta-Vidal A."/>
            <person name="Woodwark C."/>
            <person name="Zdobnov E."/>
            <person name="Bork P."/>
            <person name="Suyama M."/>
            <person name="Torrents D."/>
            <person name="Alexandersson M."/>
            <person name="Trask B.J."/>
            <person name="Young J.M."/>
            <person name="Huang H."/>
            <person name="Wang H."/>
            <person name="Xing H."/>
            <person name="Daniels S."/>
            <person name="Gietzen D."/>
            <person name="Schmidt J."/>
            <person name="Stevens K."/>
            <person name="Vitt U."/>
            <person name="Wingrove J."/>
            <person name="Camara F."/>
            <person name="Mar Alba M."/>
            <person name="Abril J.F."/>
            <person name="Guigo R."/>
            <person name="Smit A."/>
            <person name="Dubchak I."/>
            <person name="Rubin E.M."/>
            <person name="Couronne O."/>
            <person name="Poliakov A."/>
            <person name="Huebner N."/>
            <person name="Ganten D."/>
            <person name="Goesele C."/>
            <person name="Hummel O."/>
            <person name="Kreitler T."/>
            <person name="Lee Y.-A."/>
            <person name="Monti J."/>
            <person name="Schulz H."/>
            <person name="Zimdahl H."/>
            <person name="Himmelbauer H."/>
            <person name="Lehrach H."/>
            <person name="Jacob H.J."/>
            <person name="Bromberg S."/>
            <person name="Gullings-Handley J."/>
            <person name="Jensen-Seaman M.I."/>
            <person name="Kwitek A.E."/>
            <person name="Lazar J."/>
            <person name="Pasko D."/>
            <person name="Tonellato P.J."/>
            <person name="Twigger S."/>
            <person name="Ponting C.P."/>
            <person name="Duarte J.M."/>
            <person name="Rice S."/>
            <person name="Goodstadt L."/>
            <person name="Beatson S.A."/>
            <person name="Emes R.D."/>
            <person name="Winter E.E."/>
            <person name="Webber C."/>
            <person name="Brandt P."/>
            <person name="Nyakatura G."/>
            <person name="Adetobi M."/>
            <person name="Chiaromonte F."/>
            <person name="Elnitski L."/>
            <person name="Eswara P."/>
            <person name="Hardison R.C."/>
            <person name="Hou M."/>
            <person name="Kolbe D."/>
            <person name="Makova K."/>
            <person name="Miller W."/>
            <person name="Nekrutenko A."/>
            <person name="Riemer C."/>
            <person name="Schwartz S."/>
            <person name="Taylor J."/>
            <person name="Yang S."/>
            <person name="Zhang Y."/>
            <person name="Lindpaintner K."/>
            <person name="Andrews T.D."/>
            <person name="Caccamo M."/>
            <person name="Clamp M."/>
            <person name="Clarke L."/>
            <person name="Curwen V."/>
            <person name="Durbin R.M."/>
            <person name="Eyras E."/>
            <person name="Searle S.M."/>
            <person name="Cooper G.M."/>
            <person name="Batzoglou S."/>
            <person name="Brudno M."/>
            <person name="Sidow A."/>
            <person name="Stone E.A."/>
            <person name="Payseur B.A."/>
            <person name="Bourque G."/>
            <person name="Lopez-Otin C."/>
            <person name="Puente X.S."/>
            <person name="Chakrabarti K."/>
            <person name="Chatterji S."/>
            <person name="Dewey C."/>
            <person name="Pachter L."/>
            <person name="Bray N."/>
            <person name="Yap V.B."/>
            <person name="Caspi A."/>
            <person name="Tesler G."/>
            <person name="Pevzner P.A."/>
            <person name="Haussler D."/>
            <person name="Roskin K.M."/>
            <person name="Baertsch R."/>
            <person name="Clawson H."/>
            <person name="Furey T.S."/>
            <person name="Hinrichs A.S."/>
            <person name="Karolchik D."/>
            <person name="Kent W.J."/>
            <person name="Rosenbloom K.R."/>
            <person name="Trumbower H."/>
            <person name="Weirauch M."/>
            <person name="Cooper D.N."/>
            <person name="Stenson P.D."/>
            <person name="Ma B."/>
            <person name="Brent M."/>
            <person name="Arumugam M."/>
            <person name="Shteynberg D."/>
            <person name="Copley R.R."/>
            <person name="Taylor M.S."/>
            <person name="Riethman H."/>
            <person name="Mudunuri U."/>
            <person name="Peterson J."/>
            <person name="Guyer M."/>
            <person name="Felsenfeld A."/>
            <person name="Old S."/>
            <person name="Mockrin S."/>
            <person name="Collins F.S."/>
        </authorList>
    </citation>
    <scope>NUCLEOTIDE SEQUENCE [LARGE SCALE GENOMIC DNA]</scope>
    <source>
        <strain>Brown Norway</strain>
    </source>
</reference>
<reference key="2">
    <citation type="journal article" date="2004" name="Genome Res.">
        <title>The status, quality, and expansion of the NIH full-length cDNA project: the Mammalian Gene Collection (MGC).</title>
        <authorList>
            <consortium name="The MGC Project Team"/>
        </authorList>
    </citation>
    <scope>NUCLEOTIDE SEQUENCE [LARGE SCALE MRNA]</scope>
    <source>
        <tissue>Pituitary</tissue>
    </source>
</reference>
<reference key="3">
    <citation type="journal article" date="2012" name="Cell Metab.">
        <title>Complexome profiling identifies TMEM126B as a component of the mitochondrial complex I assembly complex.</title>
        <authorList>
            <person name="Heide H."/>
            <person name="Bleier L."/>
            <person name="Steger M."/>
            <person name="Ackermann J."/>
            <person name="Drose S."/>
            <person name="Schwamb B."/>
            <person name="Zornig M."/>
            <person name="Reichert A.S."/>
            <person name="Koch I."/>
            <person name="Wittig I."/>
            <person name="Brandt U."/>
        </authorList>
    </citation>
    <scope>DISRUPTION PHENOTYPE</scope>
    <scope>FUNCTION</scope>
    <scope>SUBCELLULAR LOCATION</scope>
    <scope>SUBUNIT</scope>
</reference>
<gene>
    <name evidence="5" type="primary">Tmem126b</name>
</gene>